<feature type="chain" id="PRO_1000069860" description="3-octaprenyl-4-hydroxybenzoate carboxy-lyase">
    <location>
        <begin position="1"/>
        <end position="493"/>
    </location>
</feature>
<feature type="active site" description="Proton donor" evidence="1">
    <location>
        <position position="287"/>
    </location>
</feature>
<feature type="binding site" evidence="1">
    <location>
        <position position="172"/>
    </location>
    <ligand>
        <name>Mn(2+)</name>
        <dbReference type="ChEBI" id="CHEBI:29035"/>
    </ligand>
</feature>
<feature type="binding site" evidence="1">
    <location>
        <begin position="175"/>
        <end position="177"/>
    </location>
    <ligand>
        <name>prenylated FMN</name>
        <dbReference type="ChEBI" id="CHEBI:87746"/>
    </ligand>
</feature>
<feature type="binding site" evidence="1">
    <location>
        <begin position="189"/>
        <end position="191"/>
    </location>
    <ligand>
        <name>prenylated FMN</name>
        <dbReference type="ChEBI" id="CHEBI:87746"/>
    </ligand>
</feature>
<feature type="binding site" evidence="1">
    <location>
        <begin position="194"/>
        <end position="195"/>
    </location>
    <ligand>
        <name>prenylated FMN</name>
        <dbReference type="ChEBI" id="CHEBI:87746"/>
    </ligand>
</feature>
<feature type="binding site" evidence="1">
    <location>
        <position position="238"/>
    </location>
    <ligand>
        <name>Mn(2+)</name>
        <dbReference type="ChEBI" id="CHEBI:29035"/>
    </ligand>
</feature>
<gene>
    <name evidence="1" type="primary">ubiD</name>
    <name type="ordered locus">Sbal_0465</name>
</gene>
<dbReference type="EC" id="4.1.1.98" evidence="1"/>
<dbReference type="EMBL" id="CP000563">
    <property type="protein sequence ID" value="ABN59995.1"/>
    <property type="molecule type" value="Genomic_DNA"/>
</dbReference>
<dbReference type="RefSeq" id="WP_011845665.1">
    <property type="nucleotide sequence ID" value="NC_009052.1"/>
</dbReference>
<dbReference type="SMR" id="A3CZT2"/>
<dbReference type="STRING" id="325240.Sbal_0465"/>
<dbReference type="KEGG" id="sbl:Sbal_0465"/>
<dbReference type="HOGENOM" id="CLU_023348_4_1_6"/>
<dbReference type="OrthoDB" id="9809841at2"/>
<dbReference type="UniPathway" id="UPA00232"/>
<dbReference type="Proteomes" id="UP000001557">
    <property type="component" value="Chromosome"/>
</dbReference>
<dbReference type="GO" id="GO:0005829">
    <property type="term" value="C:cytosol"/>
    <property type="evidence" value="ECO:0007669"/>
    <property type="project" value="TreeGrafter"/>
</dbReference>
<dbReference type="GO" id="GO:0005886">
    <property type="term" value="C:plasma membrane"/>
    <property type="evidence" value="ECO:0007669"/>
    <property type="project" value="UniProtKB-SubCell"/>
</dbReference>
<dbReference type="GO" id="GO:0008694">
    <property type="term" value="F:3-octaprenyl-4-hydroxybenzoate carboxy-lyase activity"/>
    <property type="evidence" value="ECO:0007669"/>
    <property type="project" value="UniProtKB-UniRule"/>
</dbReference>
<dbReference type="GO" id="GO:0046872">
    <property type="term" value="F:metal ion binding"/>
    <property type="evidence" value="ECO:0007669"/>
    <property type="project" value="UniProtKB-KW"/>
</dbReference>
<dbReference type="GO" id="GO:0006744">
    <property type="term" value="P:ubiquinone biosynthetic process"/>
    <property type="evidence" value="ECO:0007669"/>
    <property type="project" value="UniProtKB-UniRule"/>
</dbReference>
<dbReference type="FunFam" id="1.20.5.570:FF:000001">
    <property type="entry name" value="3-octaprenyl-4-hydroxybenzoate carboxy-lyase"/>
    <property type="match status" value="1"/>
</dbReference>
<dbReference type="FunFam" id="3.40.1670.10:FF:000001">
    <property type="entry name" value="3-octaprenyl-4-hydroxybenzoate carboxy-lyase"/>
    <property type="match status" value="1"/>
</dbReference>
<dbReference type="Gene3D" id="1.20.5.570">
    <property type="entry name" value="Single helix bin"/>
    <property type="match status" value="1"/>
</dbReference>
<dbReference type="Gene3D" id="3.40.1670.10">
    <property type="entry name" value="UbiD C-terminal domain-like"/>
    <property type="match status" value="1"/>
</dbReference>
<dbReference type="HAMAP" id="MF_01636">
    <property type="entry name" value="UbiD"/>
    <property type="match status" value="1"/>
</dbReference>
<dbReference type="InterPro" id="IPR002830">
    <property type="entry name" value="UbiD"/>
</dbReference>
<dbReference type="InterPro" id="IPR049381">
    <property type="entry name" value="UbiD-like_C"/>
</dbReference>
<dbReference type="InterPro" id="IPR049383">
    <property type="entry name" value="UbiD-like_N"/>
</dbReference>
<dbReference type="InterPro" id="IPR023677">
    <property type="entry name" value="UbiD_bacteria"/>
</dbReference>
<dbReference type="InterPro" id="IPR048304">
    <property type="entry name" value="UbiD_Rift_dom"/>
</dbReference>
<dbReference type="NCBIfam" id="NF008175">
    <property type="entry name" value="PRK10922.1"/>
    <property type="match status" value="1"/>
</dbReference>
<dbReference type="NCBIfam" id="TIGR00148">
    <property type="entry name" value="UbiD family decarboxylase"/>
    <property type="match status" value="1"/>
</dbReference>
<dbReference type="PANTHER" id="PTHR30108">
    <property type="entry name" value="3-OCTAPRENYL-4-HYDROXYBENZOATE CARBOXY-LYASE-RELATED"/>
    <property type="match status" value="1"/>
</dbReference>
<dbReference type="PANTHER" id="PTHR30108:SF17">
    <property type="entry name" value="FERULIC ACID DECARBOXYLASE 1"/>
    <property type="match status" value="1"/>
</dbReference>
<dbReference type="Pfam" id="PF01977">
    <property type="entry name" value="UbiD"/>
    <property type="match status" value="1"/>
</dbReference>
<dbReference type="Pfam" id="PF20696">
    <property type="entry name" value="UbiD_C"/>
    <property type="match status" value="1"/>
</dbReference>
<dbReference type="Pfam" id="PF20695">
    <property type="entry name" value="UbiD_N"/>
    <property type="match status" value="1"/>
</dbReference>
<dbReference type="SUPFAM" id="SSF50475">
    <property type="entry name" value="FMN-binding split barrel"/>
    <property type="match status" value="1"/>
</dbReference>
<dbReference type="SUPFAM" id="SSF143968">
    <property type="entry name" value="UbiD C-terminal domain-like"/>
    <property type="match status" value="1"/>
</dbReference>
<organism>
    <name type="scientific">Shewanella baltica (strain OS155 / ATCC BAA-1091)</name>
    <dbReference type="NCBI Taxonomy" id="325240"/>
    <lineage>
        <taxon>Bacteria</taxon>
        <taxon>Pseudomonadati</taxon>
        <taxon>Pseudomonadota</taxon>
        <taxon>Gammaproteobacteria</taxon>
        <taxon>Alteromonadales</taxon>
        <taxon>Shewanellaceae</taxon>
        <taxon>Shewanella</taxon>
    </lineage>
</organism>
<keyword id="KW-1003">Cell membrane</keyword>
<keyword id="KW-0210">Decarboxylase</keyword>
<keyword id="KW-0285">Flavoprotein</keyword>
<keyword id="KW-0288">FMN</keyword>
<keyword id="KW-0456">Lyase</keyword>
<keyword id="KW-0464">Manganese</keyword>
<keyword id="KW-0472">Membrane</keyword>
<keyword id="KW-0479">Metal-binding</keyword>
<keyword id="KW-1185">Reference proteome</keyword>
<keyword id="KW-0831">Ubiquinone biosynthesis</keyword>
<evidence type="ECO:0000255" key="1">
    <source>
        <dbReference type="HAMAP-Rule" id="MF_01636"/>
    </source>
</evidence>
<accession>A3CZT2</accession>
<protein>
    <recommendedName>
        <fullName evidence="1">3-octaprenyl-4-hydroxybenzoate carboxy-lyase</fullName>
        <ecNumber evidence="1">4.1.1.98</ecNumber>
    </recommendedName>
    <alternativeName>
        <fullName evidence="1">Polyprenyl p-hydroxybenzoate decarboxylase</fullName>
    </alternativeName>
</protein>
<comment type="function">
    <text evidence="1">Catalyzes the decarboxylation of 3-octaprenyl-4-hydroxy benzoate to 2-octaprenylphenol, an intermediate step in ubiquinone biosynthesis.</text>
</comment>
<comment type="catalytic activity">
    <reaction evidence="1">
        <text>a 4-hydroxy-3-(all-trans-polyprenyl)benzoate + H(+) = a 2-(all-trans-polyprenyl)phenol + CO2</text>
        <dbReference type="Rhea" id="RHEA:41680"/>
        <dbReference type="Rhea" id="RHEA-COMP:9514"/>
        <dbReference type="Rhea" id="RHEA-COMP:9516"/>
        <dbReference type="ChEBI" id="CHEBI:1269"/>
        <dbReference type="ChEBI" id="CHEBI:15378"/>
        <dbReference type="ChEBI" id="CHEBI:16526"/>
        <dbReference type="ChEBI" id="CHEBI:78396"/>
        <dbReference type="EC" id="4.1.1.98"/>
    </reaction>
</comment>
<comment type="cofactor">
    <cofactor evidence="1">
        <name>prenylated FMN</name>
        <dbReference type="ChEBI" id="CHEBI:87746"/>
    </cofactor>
    <text evidence="1">Binds 1 prenylated FMN per subunit.</text>
</comment>
<comment type="cofactor">
    <cofactor evidence="1">
        <name>Mn(2+)</name>
        <dbReference type="ChEBI" id="CHEBI:29035"/>
    </cofactor>
</comment>
<comment type="pathway">
    <text evidence="1">Cofactor biosynthesis; ubiquinone biosynthesis.</text>
</comment>
<comment type="subunit">
    <text evidence="1">Homohexamer.</text>
</comment>
<comment type="subcellular location">
    <subcellularLocation>
        <location evidence="1">Cell membrane</location>
        <topology evidence="1">Peripheral membrane protein</topology>
    </subcellularLocation>
</comment>
<comment type="similarity">
    <text evidence="1">Belongs to the UbiD family.</text>
</comment>
<proteinExistence type="inferred from homology"/>
<reference key="1">
    <citation type="submission" date="2007-02" db="EMBL/GenBank/DDBJ databases">
        <title>Complete sequence of chromosome of Shewanella baltica OS155.</title>
        <authorList>
            <consortium name="US DOE Joint Genome Institute"/>
            <person name="Copeland A."/>
            <person name="Lucas S."/>
            <person name="Lapidus A."/>
            <person name="Barry K."/>
            <person name="Detter J.C."/>
            <person name="Glavina del Rio T."/>
            <person name="Hammon N."/>
            <person name="Israni S."/>
            <person name="Dalin E."/>
            <person name="Tice H."/>
            <person name="Pitluck S."/>
            <person name="Sims D.R."/>
            <person name="Brettin T."/>
            <person name="Bruce D."/>
            <person name="Han C."/>
            <person name="Tapia R."/>
            <person name="Brainard J."/>
            <person name="Schmutz J."/>
            <person name="Larimer F."/>
            <person name="Land M."/>
            <person name="Hauser L."/>
            <person name="Kyrpides N."/>
            <person name="Mikhailova N."/>
            <person name="Brettar I."/>
            <person name="Klappenbach J."/>
            <person name="Konstantinidis K."/>
            <person name="Rodrigues J."/>
            <person name="Tiedje J."/>
            <person name="Richardson P."/>
        </authorList>
    </citation>
    <scope>NUCLEOTIDE SEQUENCE [LARGE SCALE GENOMIC DNA]</scope>
    <source>
        <strain>OS155 / ATCC BAA-1091</strain>
    </source>
</reference>
<sequence>MSFKDLRSFIDHLEANGELKRISYPVDPHLEMTEIADRVLRAKGPALLFENPKDHHMPVLVNLFGTPKRVAMALGKDDPLALREVGELLAFLKEPEPPRGFKDAIAKIPMFKQALNMPPKTVRNPPCQQVIKTGDEVDLTQLPIQHCWPGDVAPLVTWGLTITKGPRKSRQNLGIYRQQLLGKNKLIMRWLSHRGGALDFADFKQQFPGERYPVVVALGADPVTILGAVTPVPDSMSEYAFAGLLRGERTEVCKALSCDLEVPATSEIILEGYIGPEELAEEGPYGDHTGYYNETDKFPVFTVTHITHRKDAIYHSTYTGRPPDEPAMLGVALNEVFVPILRKQYPEIVDFYLPPEGCSYRMAVISIRKQYPGHAKRVMMGAWSFLRQFMYTKFIVIVDEDVNCRDWQDVIWAITTRMDPKRDTVMIENTPIDYLDFASPVAGLGSKMGLDATNKWEGETNREWGTPIVMDPKVKQKIDSIWDELGIDDSPTL</sequence>
<name>UBID_SHEB5</name>